<dbReference type="EC" id="1.7.99.1" evidence="1"/>
<dbReference type="EMBL" id="CP001048">
    <property type="protein sequence ID" value="ACC88457.1"/>
    <property type="molecule type" value="Genomic_DNA"/>
</dbReference>
<dbReference type="RefSeq" id="WP_011192048.1">
    <property type="nucleotide sequence ID" value="NZ_CP009780.1"/>
</dbReference>
<dbReference type="SMR" id="B2K9Z2"/>
<dbReference type="KEGG" id="ypb:YPTS_1485"/>
<dbReference type="PATRIC" id="fig|502801.10.peg.846"/>
<dbReference type="GO" id="GO:0005737">
    <property type="term" value="C:cytoplasm"/>
    <property type="evidence" value="ECO:0007669"/>
    <property type="project" value="UniProtKB-SubCell"/>
</dbReference>
<dbReference type="GO" id="GO:0051537">
    <property type="term" value="F:2 iron, 2 sulfur cluster binding"/>
    <property type="evidence" value="ECO:0007669"/>
    <property type="project" value="UniProtKB-KW"/>
</dbReference>
<dbReference type="GO" id="GO:0050418">
    <property type="term" value="F:hydroxylamine reductase activity"/>
    <property type="evidence" value="ECO:0007669"/>
    <property type="project" value="UniProtKB-UniRule"/>
</dbReference>
<dbReference type="GO" id="GO:0046872">
    <property type="term" value="F:metal ion binding"/>
    <property type="evidence" value="ECO:0007669"/>
    <property type="project" value="UniProtKB-KW"/>
</dbReference>
<dbReference type="GO" id="GO:0004601">
    <property type="term" value="F:peroxidase activity"/>
    <property type="evidence" value="ECO:0007669"/>
    <property type="project" value="TreeGrafter"/>
</dbReference>
<dbReference type="GO" id="GO:0042542">
    <property type="term" value="P:response to hydrogen peroxide"/>
    <property type="evidence" value="ECO:0007669"/>
    <property type="project" value="TreeGrafter"/>
</dbReference>
<dbReference type="CDD" id="cd01914">
    <property type="entry name" value="HCP"/>
    <property type="match status" value="1"/>
</dbReference>
<dbReference type="FunFam" id="1.20.1270.20:FF:000001">
    <property type="entry name" value="Hydroxylamine reductase"/>
    <property type="match status" value="1"/>
</dbReference>
<dbReference type="FunFam" id="1.20.1270.20:FF:000002">
    <property type="entry name" value="Hydroxylamine reductase"/>
    <property type="match status" value="1"/>
</dbReference>
<dbReference type="FunFam" id="3.40.50.2030:FF:000001">
    <property type="entry name" value="Hydroxylamine reductase"/>
    <property type="match status" value="1"/>
</dbReference>
<dbReference type="FunFam" id="3.40.50.2030:FF:000002">
    <property type="entry name" value="Hydroxylamine reductase"/>
    <property type="match status" value="1"/>
</dbReference>
<dbReference type="Gene3D" id="1.20.1270.20">
    <property type="match status" value="2"/>
</dbReference>
<dbReference type="Gene3D" id="3.40.50.2030">
    <property type="match status" value="2"/>
</dbReference>
<dbReference type="HAMAP" id="MF_00069">
    <property type="entry name" value="Hydroxylam_reduct"/>
    <property type="match status" value="1"/>
</dbReference>
<dbReference type="InterPro" id="IPR004137">
    <property type="entry name" value="HCP/CODH"/>
</dbReference>
<dbReference type="InterPro" id="IPR010048">
    <property type="entry name" value="Hydroxylam_reduct"/>
</dbReference>
<dbReference type="InterPro" id="IPR016099">
    <property type="entry name" value="Prismane-like_a/b-sand"/>
</dbReference>
<dbReference type="InterPro" id="IPR011254">
    <property type="entry name" value="Prismane-like_sf"/>
</dbReference>
<dbReference type="InterPro" id="IPR016100">
    <property type="entry name" value="Prismane_a-bundle"/>
</dbReference>
<dbReference type="NCBIfam" id="TIGR01703">
    <property type="entry name" value="hybrid_clust"/>
    <property type="match status" value="1"/>
</dbReference>
<dbReference type="NCBIfam" id="NF003658">
    <property type="entry name" value="PRK05290.1"/>
    <property type="match status" value="1"/>
</dbReference>
<dbReference type="PANTHER" id="PTHR30109">
    <property type="entry name" value="HYDROXYLAMINE REDUCTASE"/>
    <property type="match status" value="1"/>
</dbReference>
<dbReference type="PANTHER" id="PTHR30109:SF0">
    <property type="entry name" value="HYDROXYLAMINE REDUCTASE"/>
    <property type="match status" value="1"/>
</dbReference>
<dbReference type="Pfam" id="PF03063">
    <property type="entry name" value="Prismane"/>
    <property type="match status" value="1"/>
</dbReference>
<dbReference type="PIRSF" id="PIRSF000076">
    <property type="entry name" value="HCP"/>
    <property type="match status" value="1"/>
</dbReference>
<dbReference type="SUPFAM" id="SSF56821">
    <property type="entry name" value="Prismane protein-like"/>
    <property type="match status" value="1"/>
</dbReference>
<organism>
    <name type="scientific">Yersinia pseudotuberculosis serotype IB (strain PB1/+)</name>
    <dbReference type="NCBI Taxonomy" id="502801"/>
    <lineage>
        <taxon>Bacteria</taxon>
        <taxon>Pseudomonadati</taxon>
        <taxon>Pseudomonadota</taxon>
        <taxon>Gammaproteobacteria</taxon>
        <taxon>Enterobacterales</taxon>
        <taxon>Yersiniaceae</taxon>
        <taxon>Yersinia</taxon>
    </lineage>
</organism>
<keyword id="KW-0001">2Fe-2S</keyword>
<keyword id="KW-0963">Cytoplasm</keyword>
<keyword id="KW-0408">Iron</keyword>
<keyword id="KW-0411">Iron-sulfur</keyword>
<keyword id="KW-0479">Metal-binding</keyword>
<keyword id="KW-0560">Oxidoreductase</keyword>
<gene>
    <name evidence="1" type="primary">hcp</name>
    <name type="ordered locus">YPTS_1485</name>
</gene>
<name>HCP_YERPB</name>
<protein>
    <recommendedName>
        <fullName evidence="1">Hydroxylamine reductase</fullName>
        <ecNumber evidence="1">1.7.99.1</ecNumber>
    </recommendedName>
    <alternativeName>
        <fullName evidence="1">Hybrid-cluster protein</fullName>
        <shortName evidence="1">HCP</shortName>
    </alternativeName>
    <alternativeName>
        <fullName evidence="1">Prismane protein</fullName>
    </alternativeName>
</protein>
<comment type="function">
    <text evidence="1">Catalyzes the reduction of hydroxylamine to form NH(3) and H(2)O.</text>
</comment>
<comment type="catalytic activity">
    <reaction evidence="1">
        <text>A + NH4(+) + H2O = hydroxylamine + AH2 + H(+)</text>
        <dbReference type="Rhea" id="RHEA:22052"/>
        <dbReference type="ChEBI" id="CHEBI:13193"/>
        <dbReference type="ChEBI" id="CHEBI:15377"/>
        <dbReference type="ChEBI" id="CHEBI:15378"/>
        <dbReference type="ChEBI" id="CHEBI:15429"/>
        <dbReference type="ChEBI" id="CHEBI:17499"/>
        <dbReference type="ChEBI" id="CHEBI:28938"/>
        <dbReference type="EC" id="1.7.99.1"/>
    </reaction>
</comment>
<comment type="cofactor">
    <cofactor evidence="1">
        <name>[2Fe-2S] cluster</name>
        <dbReference type="ChEBI" id="CHEBI:190135"/>
    </cofactor>
    <text evidence="1">Binds 1 [2Fe-2S] cluster.</text>
</comment>
<comment type="cofactor">
    <cofactor evidence="1">
        <name>hybrid [4Fe-2O-2S] cluster</name>
        <dbReference type="ChEBI" id="CHEBI:60519"/>
    </cofactor>
    <text evidence="1">Binds 1 hybrid [4Fe-2O-2S] cluster.</text>
</comment>
<comment type="subcellular location">
    <subcellularLocation>
        <location evidence="1">Cytoplasm</location>
    </subcellularLocation>
</comment>
<comment type="similarity">
    <text evidence="1">Belongs to the HCP family.</text>
</comment>
<reference key="1">
    <citation type="submission" date="2008-04" db="EMBL/GenBank/DDBJ databases">
        <title>Complete sequence of Yersinia pseudotuberculosis PB1/+.</title>
        <authorList>
            <person name="Copeland A."/>
            <person name="Lucas S."/>
            <person name="Lapidus A."/>
            <person name="Glavina del Rio T."/>
            <person name="Dalin E."/>
            <person name="Tice H."/>
            <person name="Bruce D."/>
            <person name="Goodwin L."/>
            <person name="Pitluck S."/>
            <person name="Munk A.C."/>
            <person name="Brettin T."/>
            <person name="Detter J.C."/>
            <person name="Han C."/>
            <person name="Tapia R."/>
            <person name="Schmutz J."/>
            <person name="Larimer F."/>
            <person name="Land M."/>
            <person name="Hauser L."/>
            <person name="Challacombe J.F."/>
            <person name="Green L."/>
            <person name="Lindler L.E."/>
            <person name="Nikolich M.P."/>
            <person name="Richardson P."/>
        </authorList>
    </citation>
    <scope>NUCLEOTIDE SEQUENCE [LARGE SCALE GENOMIC DNA]</scope>
    <source>
        <strain>PB1/+</strain>
    </source>
</reference>
<accession>B2K9Z2</accession>
<feature type="chain" id="PRO_1000092358" description="Hydroxylamine reductase">
    <location>
        <begin position="1"/>
        <end position="550"/>
    </location>
</feature>
<feature type="binding site" evidence="1">
    <location>
        <position position="3"/>
    </location>
    <ligand>
        <name>[2Fe-2S] cluster</name>
        <dbReference type="ChEBI" id="CHEBI:190135"/>
    </ligand>
</feature>
<feature type="binding site" evidence="1">
    <location>
        <position position="6"/>
    </location>
    <ligand>
        <name>[2Fe-2S] cluster</name>
        <dbReference type="ChEBI" id="CHEBI:190135"/>
    </ligand>
</feature>
<feature type="binding site" evidence="1">
    <location>
        <position position="18"/>
    </location>
    <ligand>
        <name>[2Fe-2S] cluster</name>
        <dbReference type="ChEBI" id="CHEBI:190135"/>
    </ligand>
</feature>
<feature type="binding site" evidence="1">
    <location>
        <position position="25"/>
    </location>
    <ligand>
        <name>[2Fe-2S] cluster</name>
        <dbReference type="ChEBI" id="CHEBI:190135"/>
    </ligand>
</feature>
<feature type="binding site" evidence="1">
    <location>
        <position position="249"/>
    </location>
    <ligand>
        <name>hybrid [4Fe-2O-2S] cluster</name>
        <dbReference type="ChEBI" id="CHEBI:60519"/>
    </ligand>
</feature>
<feature type="binding site" evidence="1">
    <location>
        <position position="273"/>
    </location>
    <ligand>
        <name>hybrid [4Fe-2O-2S] cluster</name>
        <dbReference type="ChEBI" id="CHEBI:60519"/>
    </ligand>
</feature>
<feature type="binding site" evidence="1">
    <location>
        <position position="317"/>
    </location>
    <ligand>
        <name>hybrid [4Fe-2O-2S] cluster</name>
        <dbReference type="ChEBI" id="CHEBI:60519"/>
    </ligand>
</feature>
<feature type="binding site" description="via persulfide group" evidence="1">
    <location>
        <position position="405"/>
    </location>
    <ligand>
        <name>hybrid [4Fe-2O-2S] cluster</name>
        <dbReference type="ChEBI" id="CHEBI:60519"/>
    </ligand>
</feature>
<feature type="binding site" evidence="1">
    <location>
        <position position="433"/>
    </location>
    <ligand>
        <name>hybrid [4Fe-2O-2S] cluster</name>
        <dbReference type="ChEBI" id="CHEBI:60519"/>
    </ligand>
</feature>
<feature type="binding site" evidence="1">
    <location>
        <position position="458"/>
    </location>
    <ligand>
        <name>hybrid [4Fe-2O-2S] cluster</name>
        <dbReference type="ChEBI" id="CHEBI:60519"/>
    </ligand>
</feature>
<feature type="binding site" evidence="1">
    <location>
        <position position="492"/>
    </location>
    <ligand>
        <name>hybrid [4Fe-2O-2S] cluster</name>
        <dbReference type="ChEBI" id="CHEBI:60519"/>
    </ligand>
</feature>
<feature type="binding site" evidence="1">
    <location>
        <position position="494"/>
    </location>
    <ligand>
        <name>hybrid [4Fe-2O-2S] cluster</name>
        <dbReference type="ChEBI" id="CHEBI:60519"/>
    </ligand>
</feature>
<feature type="modified residue" description="Cysteine persulfide" evidence="1">
    <location>
        <position position="405"/>
    </location>
</feature>
<evidence type="ECO:0000255" key="1">
    <source>
        <dbReference type="HAMAP-Rule" id="MF_00069"/>
    </source>
</evidence>
<proteinExistence type="inferred from homology"/>
<sequence>MFCVQCEQTIRTPAGNGCSYAQGMCGKTAETSDLQDLLVAVLQGLSAWALQARELGIIDSQIDSFAPRAFFSTLTNVNFDSDRIVEYAKDAILLRHSLAVRCRLLDSTITVDHPLAELQLVADDIPSLLQQSQQFALNNDKADVGDDIHGLRMLCLYGLKGAAAYMEHAHVLGQSDEQIYAEYHAYMAWLGTQPRDVDTLLNNAMGIGKMNFNVMAILDQGETQAYGDPQPTSVNVRPVAGKAILISGHDLKDLHMLLEQTQGTGINIYTHGEMLPAHGYPELKRYPHLVGNYGSGWQNQQTEFAKFPGPILMTSNCIIDPNVGNYGDRIWTRSIVGWPGVNHLDGENFAPVIEQALGMAGFPYSELEHLITVGFGRQTLLNAADTVIDLVASKKLRHVFLVGGCDGSRTERSYFTDFARSVPQDCIIMTLACGKYRFNKLDFGTLEGLPRLLDVGQCNDAYAAIMLAVKLSEKLGCTVNDLPLSLVLSWFEQKAIVILLTLLSLGVKNIYTGPTAPGFLTDNLMAILYEKFGMQPITTVEQDMQAILGH</sequence>